<protein>
    <recommendedName>
        <fullName>Tryptophan synthase beta chain 2</fullName>
        <ecNumber>4.2.1.20</ecNumber>
    </recommendedName>
</protein>
<feature type="chain" id="PRO_0000099044" description="Tryptophan synthase beta chain 2">
    <location>
        <begin position="1"/>
        <end position="390"/>
    </location>
</feature>
<feature type="modified residue" description="N6-(pyridoxal phosphate)lysine" evidence="1">
    <location>
        <position position="83"/>
    </location>
</feature>
<name>TRPB2_METTM</name>
<sequence length="390" mass="42116">MDGKFGKYGGIFVPELLIPALEELEAAFLHYSKDRRFNEDLEHYLREYAGRPTGLYHARNLSEKLGCRVYLKREDMLHTGAHKINNTIGQALLAGYMGKRRLIAETGAGQHGIATAAAGALFGMDVDVYMGTEDVERQKLNVFRMEISGARVIPVDSGSRTLKDAINQAMRDWISSVEDTHYLIGSTMGPHPYPTMVKHFQSVIGREAREQILEIEGELPDTIIACVGGGSNAIGIFSAFLDDDVELIGAEGGGEGIESGNHGATLSAGSEGVLHGSLSYVLQDDDGQINEAHSVSAGLDYPGVGPEHAYLMETGRAMYEPITDAEALRGFKLLSRCEGIMPALESAHAIACLEKYASKPENRGKTVIVNLSGRGDKDMFLAAGLLGVDL</sequence>
<comment type="function">
    <text evidence="1">The beta subunit is responsible for the synthesis of L-tryptophan from indole and L-serine.</text>
</comment>
<comment type="catalytic activity">
    <reaction>
        <text>(1S,2R)-1-C-(indol-3-yl)glycerol 3-phosphate + L-serine = D-glyceraldehyde 3-phosphate + L-tryptophan + H2O</text>
        <dbReference type="Rhea" id="RHEA:10532"/>
        <dbReference type="ChEBI" id="CHEBI:15377"/>
        <dbReference type="ChEBI" id="CHEBI:33384"/>
        <dbReference type="ChEBI" id="CHEBI:57912"/>
        <dbReference type="ChEBI" id="CHEBI:58866"/>
        <dbReference type="ChEBI" id="CHEBI:59776"/>
        <dbReference type="EC" id="4.2.1.20"/>
    </reaction>
</comment>
<comment type="cofactor">
    <cofactor evidence="1">
        <name>pyridoxal 5'-phosphate</name>
        <dbReference type="ChEBI" id="CHEBI:597326"/>
    </cofactor>
</comment>
<comment type="pathway">
    <text>Amino-acid biosynthesis; L-tryptophan biosynthesis; L-tryptophan from chorismate: step 5/5.</text>
</comment>
<comment type="subunit">
    <text evidence="1">Tetramer of two alpha and two beta chains.</text>
</comment>
<comment type="similarity">
    <text evidence="2">Belongs to the TrpB family.</text>
</comment>
<comment type="sequence caution" evidence="2">
    <conflict type="erroneous initiation">
        <sequence resource="EMBL-CDS" id="ADL57847"/>
    </conflict>
    <text>Extended N-terminus.</text>
</comment>
<keyword id="KW-0028">Amino-acid biosynthesis</keyword>
<keyword id="KW-0057">Aromatic amino acid biosynthesis</keyword>
<keyword id="KW-0456">Lyase</keyword>
<keyword id="KW-0663">Pyridoxal phosphate</keyword>
<keyword id="KW-0822">Tryptophan biosynthesis</keyword>
<evidence type="ECO:0000250" key="1"/>
<evidence type="ECO:0000305" key="2"/>
<organism>
    <name type="scientific">Methanothermobacter marburgensis (strain ATCC BAA-927 / DSM 2133 / JCM 14651 / NBRC 100331 / OCM 82 / Marburg)</name>
    <name type="common">Methanobacterium thermoautotrophicum</name>
    <dbReference type="NCBI Taxonomy" id="79929"/>
    <lineage>
        <taxon>Archaea</taxon>
        <taxon>Methanobacteriati</taxon>
        <taxon>Methanobacteriota</taxon>
        <taxon>Methanomada group</taxon>
        <taxon>Methanobacteria</taxon>
        <taxon>Methanobacteriales</taxon>
        <taxon>Methanobacteriaceae</taxon>
        <taxon>Methanothermobacter</taxon>
    </lineage>
</organism>
<proteinExistence type="inferred from homology"/>
<reference key="1">
    <citation type="journal article" date="1991" name="J. Bacteriol.">
        <title>Tryptophan gene cluster of Methanobacterium thermoautotrophicum Marburg: molecular cloning and nucleotide sequence of a putative trpEGCFBAD operon.</title>
        <authorList>
            <person name="Meile L."/>
            <person name="Stettler R."/>
            <person name="Banholzer R."/>
            <person name="Kotik M."/>
            <person name="Leisinger T."/>
        </authorList>
    </citation>
    <scope>NUCLEOTIDE SEQUENCE [GENOMIC DNA]</scope>
    <source>
        <strain>ATCC BAA-927 / DSM 2133 / JCM 14651 / NBRC 100331 / OCM 82 / Marburg</strain>
    </source>
</reference>
<reference key="2">
    <citation type="journal article" date="2010" name="J. Bacteriol.">
        <title>Complete genome sequence of Methanothermobacter marburgensis, a methanoarchaeon model organism.</title>
        <authorList>
            <person name="Liesegang H."/>
            <person name="Kaster A.K."/>
            <person name="Wiezer A."/>
            <person name="Goenrich M."/>
            <person name="Wollherr A."/>
            <person name="Seedorf H."/>
            <person name="Gottschalk G."/>
            <person name="Thauer R.K."/>
        </authorList>
    </citation>
    <scope>NUCLEOTIDE SEQUENCE [LARGE SCALE GENOMIC DNA]</scope>
    <source>
        <strain>ATCC BAA-927 / DSM 2133 / JCM 14651 / NBRC 100331 / OCM 82 / Marburg</strain>
    </source>
</reference>
<dbReference type="EC" id="4.2.1.20"/>
<dbReference type="EMBL" id="M65060">
    <property type="protein sequence ID" value="AAA73032.1"/>
    <property type="molecule type" value="Genomic_DNA"/>
</dbReference>
<dbReference type="EMBL" id="CP001710">
    <property type="protein sequence ID" value="ADL57847.1"/>
    <property type="status" value="ALT_INIT"/>
    <property type="molecule type" value="Genomic_DNA"/>
</dbReference>
<dbReference type="RefSeq" id="WP_013295074.1">
    <property type="nucleotide sequence ID" value="NC_014408.1"/>
</dbReference>
<dbReference type="SMR" id="P26921"/>
<dbReference type="STRING" id="79929.MTBMA_c02380"/>
<dbReference type="PaxDb" id="79929-MTBMA_c02380"/>
<dbReference type="GeneID" id="9703944"/>
<dbReference type="KEGG" id="mmg:MTBMA_c02380"/>
<dbReference type="PATRIC" id="fig|79929.8.peg.234"/>
<dbReference type="HOGENOM" id="CLU_016734_3_1_2"/>
<dbReference type="OrthoDB" id="371827at2157"/>
<dbReference type="UniPathway" id="UPA00035">
    <property type="reaction ID" value="UER00044"/>
</dbReference>
<dbReference type="Proteomes" id="UP000000345">
    <property type="component" value="Chromosome"/>
</dbReference>
<dbReference type="GO" id="GO:0005737">
    <property type="term" value="C:cytoplasm"/>
    <property type="evidence" value="ECO:0007669"/>
    <property type="project" value="TreeGrafter"/>
</dbReference>
<dbReference type="GO" id="GO:0004834">
    <property type="term" value="F:tryptophan synthase activity"/>
    <property type="evidence" value="ECO:0007669"/>
    <property type="project" value="UniProtKB-UniRule"/>
</dbReference>
<dbReference type="CDD" id="cd06446">
    <property type="entry name" value="Trp-synth_B"/>
    <property type="match status" value="1"/>
</dbReference>
<dbReference type="FunFam" id="3.40.50.1100:FF:000001">
    <property type="entry name" value="Tryptophan synthase beta chain"/>
    <property type="match status" value="1"/>
</dbReference>
<dbReference type="FunFam" id="3.40.50.1100:FF:000004">
    <property type="entry name" value="Tryptophan synthase beta chain"/>
    <property type="match status" value="1"/>
</dbReference>
<dbReference type="Gene3D" id="3.40.50.1100">
    <property type="match status" value="2"/>
</dbReference>
<dbReference type="HAMAP" id="MF_00133">
    <property type="entry name" value="Trp_synth_beta"/>
    <property type="match status" value="1"/>
</dbReference>
<dbReference type="InterPro" id="IPR006653">
    <property type="entry name" value="Trp_synth_b_CS"/>
</dbReference>
<dbReference type="InterPro" id="IPR006654">
    <property type="entry name" value="Trp_synth_beta"/>
</dbReference>
<dbReference type="InterPro" id="IPR023026">
    <property type="entry name" value="Trp_synth_beta/beta-like"/>
</dbReference>
<dbReference type="InterPro" id="IPR001926">
    <property type="entry name" value="TrpB-like_PALP"/>
</dbReference>
<dbReference type="InterPro" id="IPR036052">
    <property type="entry name" value="TrpB-like_PALP_sf"/>
</dbReference>
<dbReference type="NCBIfam" id="TIGR00263">
    <property type="entry name" value="trpB"/>
    <property type="match status" value="1"/>
</dbReference>
<dbReference type="PANTHER" id="PTHR48077:SF3">
    <property type="entry name" value="TRYPTOPHAN SYNTHASE"/>
    <property type="match status" value="1"/>
</dbReference>
<dbReference type="PANTHER" id="PTHR48077">
    <property type="entry name" value="TRYPTOPHAN SYNTHASE-RELATED"/>
    <property type="match status" value="1"/>
</dbReference>
<dbReference type="Pfam" id="PF00291">
    <property type="entry name" value="PALP"/>
    <property type="match status" value="1"/>
</dbReference>
<dbReference type="PIRSF" id="PIRSF001413">
    <property type="entry name" value="Trp_syn_beta"/>
    <property type="match status" value="1"/>
</dbReference>
<dbReference type="SUPFAM" id="SSF53686">
    <property type="entry name" value="Tryptophan synthase beta subunit-like PLP-dependent enzymes"/>
    <property type="match status" value="1"/>
</dbReference>
<dbReference type="PROSITE" id="PS00168">
    <property type="entry name" value="TRP_SYNTHASE_BETA"/>
    <property type="match status" value="1"/>
</dbReference>
<gene>
    <name type="primary">trpB2</name>
    <name type="synonym">trpB</name>
    <name type="ordered locus">MTBMA_c02380</name>
</gene>
<accession>P26921</accession>
<accession>D9PUE9</accession>